<dbReference type="EC" id="6.1.1.10" evidence="1"/>
<dbReference type="EMBL" id="CP000266">
    <property type="protein sequence ID" value="ABF04291.1"/>
    <property type="molecule type" value="Genomic_DNA"/>
</dbReference>
<dbReference type="RefSeq" id="WP_005049047.1">
    <property type="nucleotide sequence ID" value="NC_008258.1"/>
</dbReference>
<dbReference type="SMR" id="Q0T324"/>
<dbReference type="KEGG" id="sfv:SFV_2170"/>
<dbReference type="HOGENOM" id="CLU_009710_7_0_6"/>
<dbReference type="Proteomes" id="UP000000659">
    <property type="component" value="Chromosome"/>
</dbReference>
<dbReference type="GO" id="GO:0005829">
    <property type="term" value="C:cytosol"/>
    <property type="evidence" value="ECO:0007669"/>
    <property type="project" value="TreeGrafter"/>
</dbReference>
<dbReference type="GO" id="GO:0005524">
    <property type="term" value="F:ATP binding"/>
    <property type="evidence" value="ECO:0007669"/>
    <property type="project" value="UniProtKB-UniRule"/>
</dbReference>
<dbReference type="GO" id="GO:0046872">
    <property type="term" value="F:metal ion binding"/>
    <property type="evidence" value="ECO:0007669"/>
    <property type="project" value="UniProtKB-KW"/>
</dbReference>
<dbReference type="GO" id="GO:0004825">
    <property type="term" value="F:methionine-tRNA ligase activity"/>
    <property type="evidence" value="ECO:0007669"/>
    <property type="project" value="UniProtKB-UniRule"/>
</dbReference>
<dbReference type="GO" id="GO:0000049">
    <property type="term" value="F:tRNA binding"/>
    <property type="evidence" value="ECO:0007669"/>
    <property type="project" value="UniProtKB-KW"/>
</dbReference>
<dbReference type="GO" id="GO:0006431">
    <property type="term" value="P:methionyl-tRNA aminoacylation"/>
    <property type="evidence" value="ECO:0007669"/>
    <property type="project" value="UniProtKB-UniRule"/>
</dbReference>
<dbReference type="CDD" id="cd07957">
    <property type="entry name" value="Anticodon_Ia_Met"/>
    <property type="match status" value="1"/>
</dbReference>
<dbReference type="CDD" id="cd00814">
    <property type="entry name" value="MetRS_core"/>
    <property type="match status" value="1"/>
</dbReference>
<dbReference type="CDD" id="cd02800">
    <property type="entry name" value="tRNA_bind_EcMetRS_like"/>
    <property type="match status" value="1"/>
</dbReference>
<dbReference type="FunFam" id="1.10.730.10:FF:000005">
    <property type="entry name" value="Methionine--tRNA ligase"/>
    <property type="match status" value="1"/>
</dbReference>
<dbReference type="FunFam" id="2.20.28.20:FF:000001">
    <property type="entry name" value="Methionine--tRNA ligase"/>
    <property type="match status" value="1"/>
</dbReference>
<dbReference type="FunFam" id="2.40.50.140:FF:000042">
    <property type="entry name" value="Methionine--tRNA ligase"/>
    <property type="match status" value="1"/>
</dbReference>
<dbReference type="Gene3D" id="3.40.50.620">
    <property type="entry name" value="HUPs"/>
    <property type="match status" value="1"/>
</dbReference>
<dbReference type="Gene3D" id="1.10.730.10">
    <property type="entry name" value="Isoleucyl-tRNA Synthetase, Domain 1"/>
    <property type="match status" value="1"/>
</dbReference>
<dbReference type="Gene3D" id="2.20.28.20">
    <property type="entry name" value="Methionyl-tRNA synthetase, Zn-domain"/>
    <property type="match status" value="1"/>
</dbReference>
<dbReference type="Gene3D" id="2.40.50.140">
    <property type="entry name" value="Nucleic acid-binding proteins"/>
    <property type="match status" value="1"/>
</dbReference>
<dbReference type="HAMAP" id="MF_00098">
    <property type="entry name" value="Met_tRNA_synth_type1"/>
    <property type="match status" value="1"/>
</dbReference>
<dbReference type="InterPro" id="IPR001412">
    <property type="entry name" value="aa-tRNA-synth_I_CS"/>
</dbReference>
<dbReference type="InterPro" id="IPR041872">
    <property type="entry name" value="Anticodon_Met"/>
</dbReference>
<dbReference type="InterPro" id="IPR004495">
    <property type="entry name" value="Met-tRNA-synth_bsu_C"/>
</dbReference>
<dbReference type="InterPro" id="IPR023458">
    <property type="entry name" value="Met-tRNA_ligase_1"/>
</dbReference>
<dbReference type="InterPro" id="IPR014758">
    <property type="entry name" value="Met-tRNA_synth"/>
</dbReference>
<dbReference type="InterPro" id="IPR015413">
    <property type="entry name" value="Methionyl/Leucyl_tRNA_Synth"/>
</dbReference>
<dbReference type="InterPro" id="IPR033911">
    <property type="entry name" value="MetRS_core"/>
</dbReference>
<dbReference type="InterPro" id="IPR029038">
    <property type="entry name" value="MetRS_Zn"/>
</dbReference>
<dbReference type="InterPro" id="IPR012340">
    <property type="entry name" value="NA-bd_OB-fold"/>
</dbReference>
<dbReference type="InterPro" id="IPR014729">
    <property type="entry name" value="Rossmann-like_a/b/a_fold"/>
</dbReference>
<dbReference type="InterPro" id="IPR002547">
    <property type="entry name" value="tRNA-bd_dom"/>
</dbReference>
<dbReference type="InterPro" id="IPR009080">
    <property type="entry name" value="tRNAsynth_Ia_anticodon-bd"/>
</dbReference>
<dbReference type="NCBIfam" id="TIGR00398">
    <property type="entry name" value="metG"/>
    <property type="match status" value="1"/>
</dbReference>
<dbReference type="NCBIfam" id="TIGR00399">
    <property type="entry name" value="metG_C_term"/>
    <property type="match status" value="1"/>
</dbReference>
<dbReference type="NCBIfam" id="NF001100">
    <property type="entry name" value="PRK00133.1"/>
    <property type="match status" value="1"/>
</dbReference>
<dbReference type="PANTHER" id="PTHR45765">
    <property type="entry name" value="METHIONINE--TRNA LIGASE"/>
    <property type="match status" value="1"/>
</dbReference>
<dbReference type="PANTHER" id="PTHR45765:SF1">
    <property type="entry name" value="METHIONINE--TRNA LIGASE, CYTOPLASMIC"/>
    <property type="match status" value="1"/>
</dbReference>
<dbReference type="Pfam" id="PF19303">
    <property type="entry name" value="Anticodon_3"/>
    <property type="match status" value="1"/>
</dbReference>
<dbReference type="Pfam" id="PF09334">
    <property type="entry name" value="tRNA-synt_1g"/>
    <property type="match status" value="1"/>
</dbReference>
<dbReference type="Pfam" id="PF01588">
    <property type="entry name" value="tRNA_bind"/>
    <property type="match status" value="1"/>
</dbReference>
<dbReference type="PRINTS" id="PR01041">
    <property type="entry name" value="TRNASYNTHMET"/>
</dbReference>
<dbReference type="SUPFAM" id="SSF47323">
    <property type="entry name" value="Anticodon-binding domain of a subclass of class I aminoacyl-tRNA synthetases"/>
    <property type="match status" value="1"/>
</dbReference>
<dbReference type="SUPFAM" id="SSF57770">
    <property type="entry name" value="Methionyl-tRNA synthetase (MetRS), Zn-domain"/>
    <property type="match status" value="1"/>
</dbReference>
<dbReference type="SUPFAM" id="SSF50249">
    <property type="entry name" value="Nucleic acid-binding proteins"/>
    <property type="match status" value="1"/>
</dbReference>
<dbReference type="SUPFAM" id="SSF52374">
    <property type="entry name" value="Nucleotidylyl transferase"/>
    <property type="match status" value="1"/>
</dbReference>
<dbReference type="PROSITE" id="PS00178">
    <property type="entry name" value="AA_TRNA_LIGASE_I"/>
    <property type="match status" value="1"/>
</dbReference>
<dbReference type="PROSITE" id="PS50886">
    <property type="entry name" value="TRBD"/>
    <property type="match status" value="1"/>
</dbReference>
<protein>
    <recommendedName>
        <fullName evidence="1">Methionine--tRNA ligase</fullName>
        <ecNumber evidence="1">6.1.1.10</ecNumber>
    </recommendedName>
    <alternativeName>
        <fullName evidence="1">Methionyl-tRNA synthetase</fullName>
        <shortName evidence="1">MetRS</shortName>
    </alternativeName>
</protein>
<feature type="chain" id="PRO_0000331915" description="Methionine--tRNA ligase">
    <location>
        <begin position="1"/>
        <end position="677"/>
    </location>
</feature>
<feature type="domain" description="tRNA-binding" evidence="1">
    <location>
        <begin position="575"/>
        <end position="677"/>
    </location>
</feature>
<feature type="short sequence motif" description="'HIGH' region">
    <location>
        <begin position="15"/>
        <end position="25"/>
    </location>
</feature>
<feature type="short sequence motif" description="'KMSKS' region">
    <location>
        <begin position="333"/>
        <end position="337"/>
    </location>
</feature>
<feature type="binding site" evidence="1">
    <location>
        <position position="146"/>
    </location>
    <ligand>
        <name>Zn(2+)</name>
        <dbReference type="ChEBI" id="CHEBI:29105"/>
    </ligand>
</feature>
<feature type="binding site" evidence="1">
    <location>
        <position position="149"/>
    </location>
    <ligand>
        <name>Zn(2+)</name>
        <dbReference type="ChEBI" id="CHEBI:29105"/>
    </ligand>
</feature>
<feature type="binding site" evidence="1">
    <location>
        <position position="159"/>
    </location>
    <ligand>
        <name>Zn(2+)</name>
        <dbReference type="ChEBI" id="CHEBI:29105"/>
    </ligand>
</feature>
<feature type="binding site" evidence="1">
    <location>
        <position position="162"/>
    </location>
    <ligand>
        <name>Zn(2+)</name>
        <dbReference type="ChEBI" id="CHEBI:29105"/>
    </ligand>
</feature>
<feature type="binding site" evidence="1">
    <location>
        <position position="336"/>
    </location>
    <ligand>
        <name>ATP</name>
        <dbReference type="ChEBI" id="CHEBI:30616"/>
    </ligand>
</feature>
<accession>Q0T324</accession>
<name>SYM_SHIF8</name>
<reference key="1">
    <citation type="journal article" date="2006" name="BMC Genomics">
        <title>Complete genome sequence of Shigella flexneri 5b and comparison with Shigella flexneri 2a.</title>
        <authorList>
            <person name="Nie H."/>
            <person name="Yang F."/>
            <person name="Zhang X."/>
            <person name="Yang J."/>
            <person name="Chen L."/>
            <person name="Wang J."/>
            <person name="Xiong Z."/>
            <person name="Peng J."/>
            <person name="Sun L."/>
            <person name="Dong J."/>
            <person name="Xue Y."/>
            <person name="Xu X."/>
            <person name="Chen S."/>
            <person name="Yao Z."/>
            <person name="Shen Y."/>
            <person name="Jin Q."/>
        </authorList>
    </citation>
    <scope>NUCLEOTIDE SEQUENCE [LARGE SCALE GENOMIC DNA]</scope>
    <source>
        <strain>8401</strain>
    </source>
</reference>
<comment type="function">
    <text evidence="1">Is required not only for elongation of protein synthesis but also for the initiation of all mRNA translation through initiator tRNA(fMet) aminoacylation.</text>
</comment>
<comment type="catalytic activity">
    <reaction evidence="1">
        <text>tRNA(Met) + L-methionine + ATP = L-methionyl-tRNA(Met) + AMP + diphosphate</text>
        <dbReference type="Rhea" id="RHEA:13481"/>
        <dbReference type="Rhea" id="RHEA-COMP:9667"/>
        <dbReference type="Rhea" id="RHEA-COMP:9698"/>
        <dbReference type="ChEBI" id="CHEBI:30616"/>
        <dbReference type="ChEBI" id="CHEBI:33019"/>
        <dbReference type="ChEBI" id="CHEBI:57844"/>
        <dbReference type="ChEBI" id="CHEBI:78442"/>
        <dbReference type="ChEBI" id="CHEBI:78530"/>
        <dbReference type="ChEBI" id="CHEBI:456215"/>
        <dbReference type="EC" id="6.1.1.10"/>
    </reaction>
</comment>
<comment type="cofactor">
    <cofactor evidence="1">
        <name>Zn(2+)</name>
        <dbReference type="ChEBI" id="CHEBI:29105"/>
    </cofactor>
    <text evidence="1">Binds 1 zinc ion per subunit.</text>
</comment>
<comment type="subunit">
    <text evidence="1">Homodimer.</text>
</comment>
<comment type="subcellular location">
    <subcellularLocation>
        <location evidence="1">Cytoplasm</location>
    </subcellularLocation>
</comment>
<comment type="similarity">
    <text evidence="1">Belongs to the class-I aminoacyl-tRNA synthetase family. MetG type 1 subfamily.</text>
</comment>
<organism>
    <name type="scientific">Shigella flexneri serotype 5b (strain 8401)</name>
    <dbReference type="NCBI Taxonomy" id="373384"/>
    <lineage>
        <taxon>Bacteria</taxon>
        <taxon>Pseudomonadati</taxon>
        <taxon>Pseudomonadota</taxon>
        <taxon>Gammaproteobacteria</taxon>
        <taxon>Enterobacterales</taxon>
        <taxon>Enterobacteriaceae</taxon>
        <taxon>Shigella</taxon>
    </lineage>
</organism>
<keyword id="KW-0030">Aminoacyl-tRNA synthetase</keyword>
<keyword id="KW-0067">ATP-binding</keyword>
<keyword id="KW-0963">Cytoplasm</keyword>
<keyword id="KW-0436">Ligase</keyword>
<keyword id="KW-0479">Metal-binding</keyword>
<keyword id="KW-0547">Nucleotide-binding</keyword>
<keyword id="KW-0648">Protein biosynthesis</keyword>
<keyword id="KW-0694">RNA-binding</keyword>
<keyword id="KW-0820">tRNA-binding</keyword>
<keyword id="KW-0862">Zinc</keyword>
<proteinExistence type="inferred from homology"/>
<sequence>MTQVAKKILVTCALPYANGSIHLGHMLEHIQADVWVRYQRMRGHEVNFICADDAHGTPIMLKAQQLGITPEQMIGEMSQEHQTDFAGFNISYDNYHSTHSEENRQLSELIYSRLKENGFIKNRTISQLYDPEKGMFLPDRFVKGTCPKCKSPDQYGDNCEVCGATYSPTELIEPKSVVSGATPVMRDSEHFFFDLPSFSEMLQAWTRSGALQEQVANKMQEWFESGLQQWDISRDAPYFGFEIPNAPGKYFYVWLDAPIGYMGSFKNLCDKRGDSVSFDEYWKKDSTAELYHFIGKDIVYFHSLFWPAMLEGSNFRKPTNLFVHGYVTVNGAKMSKSRGTFIKASTWLNHFDADSLRYYYTAKLSSRIDDIDLNLEDFVQRVNADIVNKVVNLASRNAGFINKRFDGVLASELADPELYKTFTDAAEVIGEAWESREFGKAVREIMALADLANRYVDEQAPWVVAKQEGRDADLQAICSMGINLFRVLMTYLKPVLPKLTERAEAFLNTELTWDGIQQPLLGHKVNPFKALYNRIDMKQVEALVEASKEEVKATTAPVTGPLADDPIQETITFDDFAKVDLRVALIENAEFVEGSDKLLRLTLDLGGEKRNVFSGIRSAYPDPQALIGRHTIMVANLAPRKMRFGISEGMVMAAGPGGKDIFLLSPDAGAKPGHQVK</sequence>
<evidence type="ECO:0000255" key="1">
    <source>
        <dbReference type="HAMAP-Rule" id="MF_00098"/>
    </source>
</evidence>
<gene>
    <name evidence="1" type="primary">metG</name>
    <name type="ordered locus">SFV_2170</name>
</gene>